<accession>B7V0L4</accession>
<organism>
    <name type="scientific">Pseudomonas aeruginosa (strain LESB58)</name>
    <dbReference type="NCBI Taxonomy" id="557722"/>
    <lineage>
        <taxon>Bacteria</taxon>
        <taxon>Pseudomonadati</taxon>
        <taxon>Pseudomonadota</taxon>
        <taxon>Gammaproteobacteria</taxon>
        <taxon>Pseudomonadales</taxon>
        <taxon>Pseudomonadaceae</taxon>
        <taxon>Pseudomonas</taxon>
    </lineage>
</organism>
<dbReference type="EMBL" id="FM209186">
    <property type="protein sequence ID" value="CAW29808.1"/>
    <property type="molecule type" value="Genomic_DNA"/>
</dbReference>
<dbReference type="RefSeq" id="WP_003095005.1">
    <property type="nucleotide sequence ID" value="NC_011770.1"/>
</dbReference>
<dbReference type="SMR" id="B7V0L4"/>
<dbReference type="KEGG" id="pag:PLES_50541"/>
<dbReference type="HOGENOM" id="CLU_092816_2_1_6"/>
<dbReference type="GO" id="GO:0009279">
    <property type="term" value="C:cell outer membrane"/>
    <property type="evidence" value="ECO:0007669"/>
    <property type="project" value="UniProtKB-SubCell"/>
</dbReference>
<dbReference type="GO" id="GO:0044874">
    <property type="term" value="P:lipoprotein localization to outer membrane"/>
    <property type="evidence" value="ECO:0007669"/>
    <property type="project" value="UniProtKB-UniRule"/>
</dbReference>
<dbReference type="GO" id="GO:0015031">
    <property type="term" value="P:protein transport"/>
    <property type="evidence" value="ECO:0007669"/>
    <property type="project" value="UniProtKB-KW"/>
</dbReference>
<dbReference type="CDD" id="cd16326">
    <property type="entry name" value="LolB"/>
    <property type="match status" value="1"/>
</dbReference>
<dbReference type="FunFam" id="2.50.20.10:FF:000009">
    <property type="entry name" value="Outer-membrane lipoprotein LolB"/>
    <property type="match status" value="1"/>
</dbReference>
<dbReference type="Gene3D" id="2.50.20.10">
    <property type="entry name" value="Lipoprotein localisation LolA/LolB/LppX"/>
    <property type="match status" value="1"/>
</dbReference>
<dbReference type="HAMAP" id="MF_00233">
    <property type="entry name" value="LolB"/>
    <property type="match status" value="1"/>
</dbReference>
<dbReference type="InterPro" id="IPR029046">
    <property type="entry name" value="LolA/LolB/LppX"/>
</dbReference>
<dbReference type="InterPro" id="IPR004565">
    <property type="entry name" value="OM_lipoprot_LolB"/>
</dbReference>
<dbReference type="NCBIfam" id="TIGR00548">
    <property type="entry name" value="lolB"/>
    <property type="match status" value="1"/>
</dbReference>
<dbReference type="Pfam" id="PF03550">
    <property type="entry name" value="LolB"/>
    <property type="match status" value="1"/>
</dbReference>
<dbReference type="SUPFAM" id="SSF89392">
    <property type="entry name" value="Prokaryotic lipoproteins and lipoprotein localization factors"/>
    <property type="match status" value="1"/>
</dbReference>
<dbReference type="PROSITE" id="PS51257">
    <property type="entry name" value="PROKAR_LIPOPROTEIN"/>
    <property type="match status" value="1"/>
</dbReference>
<reference key="1">
    <citation type="journal article" date="2009" name="Genome Res.">
        <title>Newly introduced genomic prophage islands are critical determinants of in vivo competitiveness in the Liverpool epidemic strain of Pseudomonas aeruginosa.</title>
        <authorList>
            <person name="Winstanley C."/>
            <person name="Langille M.G.I."/>
            <person name="Fothergill J.L."/>
            <person name="Kukavica-Ibrulj I."/>
            <person name="Paradis-Bleau C."/>
            <person name="Sanschagrin F."/>
            <person name="Thomson N.R."/>
            <person name="Winsor G.L."/>
            <person name="Quail M.A."/>
            <person name="Lennard N."/>
            <person name="Bignell A."/>
            <person name="Clarke L."/>
            <person name="Seeger K."/>
            <person name="Saunders D."/>
            <person name="Harris D."/>
            <person name="Parkhill J."/>
            <person name="Hancock R.E.W."/>
            <person name="Brinkman F.S.L."/>
            <person name="Levesque R.C."/>
        </authorList>
    </citation>
    <scope>NUCLEOTIDE SEQUENCE [LARGE SCALE GENOMIC DNA]</scope>
    <source>
        <strain>LESB58</strain>
    </source>
</reference>
<gene>
    <name evidence="1" type="primary">lolB</name>
    <name type="ordered locus">PLES_50541</name>
</gene>
<proteinExistence type="inferred from homology"/>
<evidence type="ECO:0000255" key="1">
    <source>
        <dbReference type="HAMAP-Rule" id="MF_00233"/>
    </source>
</evidence>
<protein>
    <recommendedName>
        <fullName evidence="1">Outer-membrane lipoprotein LolB</fullName>
    </recommendedName>
</protein>
<keyword id="KW-0998">Cell outer membrane</keyword>
<keyword id="KW-0143">Chaperone</keyword>
<keyword id="KW-0449">Lipoprotein</keyword>
<keyword id="KW-0472">Membrane</keyword>
<keyword id="KW-0564">Palmitate</keyword>
<keyword id="KW-0653">Protein transport</keyword>
<keyword id="KW-0732">Signal</keyword>
<keyword id="KW-0813">Transport</keyword>
<name>LOLB_PSEA8</name>
<comment type="function">
    <text evidence="1">Plays a critical role in the incorporation of lipoproteins in the outer membrane after they are released by the LolA protein.</text>
</comment>
<comment type="subunit">
    <text evidence="1">Monomer.</text>
</comment>
<comment type="subcellular location">
    <subcellularLocation>
        <location evidence="1">Cell outer membrane</location>
        <topology evidence="1">Lipid-anchor</topology>
    </subcellularLocation>
</comment>
<comment type="similarity">
    <text evidence="1">Belongs to the LolB family.</text>
</comment>
<sequence>MRLRLFLAASALALLSGCAGLTSHEALEGQGDAQTWKTHKQQLSELDAWQIDGKVGIRAPRDSGSGTLFWLQRQGYYDIRLSGPLGRGAARLTGREGAVSLEVAGQGRYQAESPEALLEEQLGWRLPVSHLLWWVRGLPAPDSKSRLTLDADSRLARLEQDGWQIEYTRYAEQNGYWLPERLKLHGQDLDVTLVIKDWQPRQLGR</sequence>
<feature type="signal peptide" evidence="1">
    <location>
        <begin position="1"/>
        <end position="17"/>
    </location>
</feature>
<feature type="chain" id="PRO_1000118979" description="Outer-membrane lipoprotein LolB">
    <location>
        <begin position="18"/>
        <end position="205"/>
    </location>
</feature>
<feature type="lipid moiety-binding region" description="N-palmitoyl cysteine" evidence="1">
    <location>
        <position position="18"/>
    </location>
</feature>
<feature type="lipid moiety-binding region" description="S-diacylglycerol cysteine" evidence="1">
    <location>
        <position position="18"/>
    </location>
</feature>